<proteinExistence type="inferred from homology"/>
<sequence>MLKNKTFGSALIIAGTTIGAGMLAMPLTSAGMGFGYTLLLLVGLWALLVYSGLLFVEVYQTADQLDDGVATLAEKYFGVPGRIFATLSLLVLLYALSAAYITGGGSLLSGLPTAFGMEAMSLKTAIIIFTVVLGSFVVVGTKGVDGLTRVLFIGKLIAFAFVLFMMLPKVATDNLMALPLDYAFVVSAAPIFLTSFGFHVIMASVNSYLGGSVDKFRRAILIGTAIPLAAYLVWQLATHGVLSQSEFVRILQADPTLNGLVNATREITGSHFMGEVVRVFSSLALITSFLGVMLGVFEGLGDLFKRYHLPNNRFVLTIAAFLPPLVFALFYPEGFITALSYAGLLCAFYCLILPISLAWRTRIENPTLPYRVAGGNFALVLALLIGVVIMLIPFLIQWGYLPVVAG</sequence>
<protein>
    <recommendedName>
        <fullName evidence="1">Tyrosine-specific transport system 2</fullName>
    </recommendedName>
    <alternativeName>
        <fullName evidence="1">Tyrosine permease 2</fullName>
    </alternativeName>
    <alternativeName>
        <fullName evidence="1">Tyrosine:H(+) symporter 2</fullName>
    </alternativeName>
</protein>
<name>TYRPB_HAEIN</name>
<accession>P44747</accession>
<organism>
    <name type="scientific">Haemophilus influenzae (strain ATCC 51907 / DSM 11121 / KW20 / Rd)</name>
    <dbReference type="NCBI Taxonomy" id="71421"/>
    <lineage>
        <taxon>Bacteria</taxon>
        <taxon>Pseudomonadati</taxon>
        <taxon>Pseudomonadota</taxon>
        <taxon>Gammaproteobacteria</taxon>
        <taxon>Pasteurellales</taxon>
        <taxon>Pasteurellaceae</taxon>
        <taxon>Haemophilus</taxon>
    </lineage>
</organism>
<dbReference type="EMBL" id="L42023">
    <property type="protein sequence ID" value="AAC22185.1"/>
    <property type="molecule type" value="Genomic_DNA"/>
</dbReference>
<dbReference type="PIR" id="F64074">
    <property type="entry name" value="F64074"/>
</dbReference>
<dbReference type="RefSeq" id="NP_438686.1">
    <property type="nucleotide sequence ID" value="NC_000907.1"/>
</dbReference>
<dbReference type="SMR" id="P44747"/>
<dbReference type="STRING" id="71421.HI_0528"/>
<dbReference type="EnsemblBacteria" id="AAC22185">
    <property type="protein sequence ID" value="AAC22185"/>
    <property type="gene ID" value="HI_0528"/>
</dbReference>
<dbReference type="KEGG" id="hin:HI_0528"/>
<dbReference type="PATRIC" id="fig|71421.8.peg.547"/>
<dbReference type="eggNOG" id="COG0814">
    <property type="taxonomic scope" value="Bacteria"/>
</dbReference>
<dbReference type="HOGENOM" id="CLU_038102_3_0_6"/>
<dbReference type="OrthoDB" id="18749at2"/>
<dbReference type="PhylomeDB" id="P44747"/>
<dbReference type="BioCyc" id="HINF71421:G1GJ1-541-MONOMER"/>
<dbReference type="Proteomes" id="UP000000579">
    <property type="component" value="Chromosome"/>
</dbReference>
<dbReference type="GO" id="GO:0005886">
    <property type="term" value="C:plasma membrane"/>
    <property type="evidence" value="ECO:0000318"/>
    <property type="project" value="GO_Central"/>
</dbReference>
<dbReference type="GO" id="GO:0015173">
    <property type="term" value="F:aromatic amino acid transmembrane transporter activity"/>
    <property type="evidence" value="ECO:0007669"/>
    <property type="project" value="InterPro"/>
</dbReference>
<dbReference type="GO" id="GO:0015293">
    <property type="term" value="F:symporter activity"/>
    <property type="evidence" value="ECO:0007669"/>
    <property type="project" value="UniProtKB-KW"/>
</dbReference>
<dbReference type="GO" id="GO:0022857">
    <property type="term" value="F:transmembrane transporter activity"/>
    <property type="evidence" value="ECO:0000318"/>
    <property type="project" value="GO_Central"/>
</dbReference>
<dbReference type="GO" id="GO:0003333">
    <property type="term" value="P:amino acid transmembrane transport"/>
    <property type="evidence" value="ECO:0000318"/>
    <property type="project" value="GO_Central"/>
</dbReference>
<dbReference type="Gene3D" id="1.20.1740.10">
    <property type="entry name" value="Amino acid/polyamine transporter I"/>
    <property type="match status" value="1"/>
</dbReference>
<dbReference type="InterPro" id="IPR018227">
    <property type="entry name" value="Amino_acid_transport_2"/>
</dbReference>
<dbReference type="InterPro" id="IPR013061">
    <property type="entry name" value="Trp/try_permease_CS"/>
</dbReference>
<dbReference type="InterPro" id="IPR013059">
    <property type="entry name" value="Trp_tyr_transpt"/>
</dbReference>
<dbReference type="NCBIfam" id="TIGR00837">
    <property type="entry name" value="araaP"/>
    <property type="match status" value="1"/>
</dbReference>
<dbReference type="PANTHER" id="PTHR46997">
    <property type="entry name" value="LOW AFFINITY TRYPTOPHAN PERMEASE-RELATED"/>
    <property type="match status" value="1"/>
</dbReference>
<dbReference type="PANTHER" id="PTHR46997:SF2">
    <property type="entry name" value="TYROSINE-SPECIFIC TRANSPORT SYSTEM"/>
    <property type="match status" value="1"/>
</dbReference>
<dbReference type="Pfam" id="PF03222">
    <property type="entry name" value="Trp_Tyr_perm"/>
    <property type="match status" value="1"/>
</dbReference>
<dbReference type="PRINTS" id="PR00166">
    <property type="entry name" value="AROAAPRMEASE"/>
</dbReference>
<dbReference type="PROSITE" id="PS00594">
    <property type="entry name" value="AROMATIC_AA_PERMEASE_1"/>
    <property type="match status" value="1"/>
</dbReference>
<reference key="1">
    <citation type="journal article" date="1995" name="Science">
        <title>Whole-genome random sequencing and assembly of Haemophilus influenzae Rd.</title>
        <authorList>
            <person name="Fleischmann R.D."/>
            <person name="Adams M.D."/>
            <person name="White O."/>
            <person name="Clayton R.A."/>
            <person name="Kirkness E.F."/>
            <person name="Kerlavage A.R."/>
            <person name="Bult C.J."/>
            <person name="Tomb J.-F."/>
            <person name="Dougherty B.A."/>
            <person name="Merrick J.M."/>
            <person name="McKenney K."/>
            <person name="Sutton G.G."/>
            <person name="FitzHugh W."/>
            <person name="Fields C.A."/>
            <person name="Gocayne J.D."/>
            <person name="Scott J.D."/>
            <person name="Shirley R."/>
            <person name="Liu L.-I."/>
            <person name="Glodek A."/>
            <person name="Kelley J.M."/>
            <person name="Weidman J.F."/>
            <person name="Phillips C.A."/>
            <person name="Spriggs T."/>
            <person name="Hedblom E."/>
            <person name="Cotton M.D."/>
            <person name="Utterback T.R."/>
            <person name="Hanna M.C."/>
            <person name="Nguyen D.T."/>
            <person name="Saudek D.M."/>
            <person name="Brandon R.C."/>
            <person name="Fine L.D."/>
            <person name="Fritchman J.L."/>
            <person name="Fuhrmann J.L."/>
            <person name="Geoghagen N.S.M."/>
            <person name="Gnehm C.L."/>
            <person name="McDonald L.A."/>
            <person name="Small K.V."/>
            <person name="Fraser C.M."/>
            <person name="Smith H.O."/>
            <person name="Venter J.C."/>
        </authorList>
    </citation>
    <scope>NUCLEOTIDE SEQUENCE [LARGE SCALE GENOMIC DNA]</scope>
    <source>
        <strain>ATCC 51907 / DSM 11121 / KW20 / Rd</strain>
    </source>
</reference>
<comment type="function">
    <text evidence="1">Transports tyrosine across the cytoplasmic membrane. The transport system is energized by the proton motive force.</text>
</comment>
<comment type="catalytic activity">
    <reaction evidence="1">
        <text>L-tyrosine(in) + H(+)(in) = L-tyrosine(out) + H(+)(out)</text>
        <dbReference type="Rhea" id="RHEA:28875"/>
        <dbReference type="ChEBI" id="CHEBI:15378"/>
        <dbReference type="ChEBI" id="CHEBI:58315"/>
    </reaction>
</comment>
<comment type="subcellular location">
    <subcellularLocation>
        <location evidence="1">Cell inner membrane</location>
        <topology evidence="2">Multi-pass membrane protein</topology>
    </subcellularLocation>
</comment>
<comment type="similarity">
    <text evidence="3">Belongs to the amino acid/polyamine transporter 2 family. Mtr/TnaB/TyrP permease subfamily.</text>
</comment>
<feature type="chain" id="PRO_0000093806" description="Tyrosine-specific transport system 2">
    <location>
        <begin position="1"/>
        <end position="406"/>
    </location>
</feature>
<feature type="transmembrane region" description="Helical" evidence="2">
    <location>
        <begin position="7"/>
        <end position="27"/>
    </location>
</feature>
<feature type="transmembrane region" description="Helical" evidence="2">
    <location>
        <begin position="38"/>
        <end position="58"/>
    </location>
</feature>
<feature type="transmembrane region" description="Helical" evidence="2">
    <location>
        <begin position="83"/>
        <end position="103"/>
    </location>
</feature>
<feature type="transmembrane region" description="Helical" evidence="2">
    <location>
        <begin position="119"/>
        <end position="139"/>
    </location>
</feature>
<feature type="transmembrane region" description="Helical" evidence="2">
    <location>
        <begin position="150"/>
        <end position="170"/>
    </location>
</feature>
<feature type="transmembrane region" description="Helical" evidence="2">
    <location>
        <begin position="183"/>
        <end position="203"/>
    </location>
</feature>
<feature type="transmembrane region" description="Helical" evidence="2">
    <location>
        <begin position="219"/>
        <end position="239"/>
    </location>
</feature>
<feature type="transmembrane region" description="Helical" evidence="2">
    <location>
        <begin position="279"/>
        <end position="299"/>
    </location>
</feature>
<feature type="transmembrane region" description="Helical" evidence="2">
    <location>
        <begin position="314"/>
        <end position="334"/>
    </location>
</feature>
<feature type="transmembrane region" description="Helical" evidence="2">
    <location>
        <begin position="335"/>
        <end position="355"/>
    </location>
</feature>
<feature type="transmembrane region" description="Helical" evidence="2">
    <location>
        <begin position="376"/>
        <end position="396"/>
    </location>
</feature>
<evidence type="ECO:0000250" key="1">
    <source>
        <dbReference type="UniProtKB" id="P0AAD4"/>
    </source>
</evidence>
<evidence type="ECO:0000255" key="2"/>
<evidence type="ECO:0000305" key="3"/>
<gene>
    <name type="primary">tyrP-B</name>
    <name type="ordered locus">HI_0528</name>
</gene>
<keyword id="KW-0029">Amino-acid transport</keyword>
<keyword id="KW-0997">Cell inner membrane</keyword>
<keyword id="KW-1003">Cell membrane</keyword>
<keyword id="KW-0472">Membrane</keyword>
<keyword id="KW-1185">Reference proteome</keyword>
<keyword id="KW-0769">Symport</keyword>
<keyword id="KW-0812">Transmembrane</keyword>
<keyword id="KW-1133">Transmembrane helix</keyword>
<keyword id="KW-0813">Transport</keyword>